<feature type="chain" id="PRO_0000071732" description="A-type ATP synthase subunit K">
    <location>
        <begin position="1"/>
        <end position="101"/>
    </location>
</feature>
<feature type="transmembrane region" description="Helical" evidence="2">
    <location>
        <begin position="4"/>
        <end position="24"/>
    </location>
</feature>
<feature type="transmembrane region" description="Helical" evidence="2">
    <location>
        <begin position="32"/>
        <end position="52"/>
    </location>
</feature>
<feature type="transmembrane region" description="Helical" evidence="2">
    <location>
        <begin position="75"/>
        <end position="95"/>
    </location>
</feature>
<proteinExistence type="inferred from homology"/>
<reference key="1">
    <citation type="journal article" date="2005" name="J. Bacteriol.">
        <title>The genome of Sulfolobus acidocaldarius, a model organism of the Crenarchaeota.</title>
        <authorList>
            <person name="Chen L."/>
            <person name="Bruegger K."/>
            <person name="Skovgaard M."/>
            <person name="Redder P."/>
            <person name="She Q."/>
            <person name="Torarinsson E."/>
            <person name="Greve B."/>
            <person name="Awayez M."/>
            <person name="Zibat A."/>
            <person name="Klenk H.-P."/>
            <person name="Garrett R.A."/>
        </authorList>
    </citation>
    <scope>NUCLEOTIDE SEQUENCE [LARGE SCALE GENOMIC DNA]</scope>
    <source>
        <strain>ATCC 33909 / DSM 639 / JCM 8929 / NBRC 15157 / NCIMB 11770</strain>
    </source>
</reference>
<comment type="function">
    <text evidence="1">Component of the A-type ATP synthase that produces ATP from ADP in the presence of a proton gradient across the membrane.</text>
</comment>
<comment type="subunit">
    <text evidence="1">Has multiple subunits with at least A(3), B(3), C, D, E, F, H, I and proteolipid K(x).</text>
</comment>
<comment type="subcellular location">
    <subcellularLocation>
        <location evidence="4">Cell membrane</location>
        <topology evidence="4">Multi-pass membrane protein</topology>
    </subcellularLocation>
</comment>
<comment type="similarity">
    <text evidence="4">Belongs to the V-ATPase proteolipid subunit family.</text>
</comment>
<accession>Q4J8L5</accession>
<sequence length="101" mass="9949">MRKALLISLILPILIGGLVAAAQAPQDTPQGFMGINIGAGLAVGLAAIGAGVAVGTAAAAGIGVLTEKREMFGTVLIFVAIGEGIAVYGIIFAVLMLFAGI</sequence>
<keyword id="KW-0067">ATP-binding</keyword>
<keyword id="KW-1003">Cell membrane</keyword>
<keyword id="KW-0375">Hydrogen ion transport</keyword>
<keyword id="KW-0378">Hydrolase</keyword>
<keyword id="KW-0406">Ion transport</keyword>
<keyword id="KW-0446">Lipid-binding</keyword>
<keyword id="KW-0472">Membrane</keyword>
<keyword id="KW-0547">Nucleotide-binding</keyword>
<keyword id="KW-1185">Reference proteome</keyword>
<keyword id="KW-0812">Transmembrane</keyword>
<keyword id="KW-1133">Transmembrane helix</keyword>
<keyword id="KW-0813">Transport</keyword>
<protein>
    <recommendedName>
        <fullName evidence="4">A-type ATP synthase subunit K</fullName>
    </recommendedName>
    <alternativeName>
        <fullName evidence="1">ATPase proteolipid subunit</fullName>
    </alternativeName>
    <alternativeName>
        <fullName evidence="3">Membrane-associated ATPase C subunit</fullName>
    </alternativeName>
</protein>
<dbReference type="EMBL" id="CP000077">
    <property type="protein sequence ID" value="AAY80865.1"/>
    <property type="molecule type" value="Genomic_DNA"/>
</dbReference>
<dbReference type="RefSeq" id="WP_011278367.1">
    <property type="nucleotide sequence ID" value="NC_007181.1"/>
</dbReference>
<dbReference type="SMR" id="Q4J8L5"/>
<dbReference type="STRING" id="330779.Saci_1552"/>
<dbReference type="GeneID" id="14552045"/>
<dbReference type="KEGG" id="sai:Saci_1552"/>
<dbReference type="PATRIC" id="fig|330779.12.peg.1492"/>
<dbReference type="eggNOG" id="arCOG02455">
    <property type="taxonomic scope" value="Archaea"/>
</dbReference>
<dbReference type="HOGENOM" id="CLU_148047_3_1_2"/>
<dbReference type="Proteomes" id="UP000001018">
    <property type="component" value="Chromosome"/>
</dbReference>
<dbReference type="GO" id="GO:0005886">
    <property type="term" value="C:plasma membrane"/>
    <property type="evidence" value="ECO:0007669"/>
    <property type="project" value="UniProtKB-SubCell"/>
</dbReference>
<dbReference type="GO" id="GO:0033179">
    <property type="term" value="C:proton-transporting V-type ATPase, V0 domain"/>
    <property type="evidence" value="ECO:0007669"/>
    <property type="project" value="InterPro"/>
</dbReference>
<dbReference type="GO" id="GO:0005524">
    <property type="term" value="F:ATP binding"/>
    <property type="evidence" value="ECO:0007669"/>
    <property type="project" value="UniProtKB-KW"/>
</dbReference>
<dbReference type="GO" id="GO:0016787">
    <property type="term" value="F:hydrolase activity"/>
    <property type="evidence" value="ECO:0007669"/>
    <property type="project" value="UniProtKB-KW"/>
</dbReference>
<dbReference type="GO" id="GO:0008289">
    <property type="term" value="F:lipid binding"/>
    <property type="evidence" value="ECO:0007669"/>
    <property type="project" value="UniProtKB-KW"/>
</dbReference>
<dbReference type="GO" id="GO:0046961">
    <property type="term" value="F:proton-transporting ATPase activity, rotational mechanism"/>
    <property type="evidence" value="ECO:0007669"/>
    <property type="project" value="InterPro"/>
</dbReference>
<dbReference type="CDD" id="cd18120">
    <property type="entry name" value="ATP-synt_Vo_Ao_c"/>
    <property type="match status" value="1"/>
</dbReference>
<dbReference type="Gene3D" id="1.20.120.610">
    <property type="entry name" value="lithium bound rotor ring of v- atpase"/>
    <property type="match status" value="1"/>
</dbReference>
<dbReference type="InterPro" id="IPR002379">
    <property type="entry name" value="ATPase_proteolipid_c-like_dom"/>
</dbReference>
<dbReference type="InterPro" id="IPR000245">
    <property type="entry name" value="ATPase_proteolipid_csu"/>
</dbReference>
<dbReference type="InterPro" id="IPR035921">
    <property type="entry name" value="F/V-ATP_Csub_sf"/>
</dbReference>
<dbReference type="NCBIfam" id="NF004888">
    <property type="entry name" value="PRK06251.1"/>
    <property type="match status" value="1"/>
</dbReference>
<dbReference type="Pfam" id="PF00137">
    <property type="entry name" value="ATP-synt_C"/>
    <property type="match status" value="1"/>
</dbReference>
<dbReference type="PRINTS" id="PR00122">
    <property type="entry name" value="VACATPASE"/>
</dbReference>
<dbReference type="SUPFAM" id="SSF81333">
    <property type="entry name" value="F1F0 ATP synthase subunit C"/>
    <property type="match status" value="1"/>
</dbReference>
<name>AATK_SULAC</name>
<gene>
    <name evidence="1" type="primary">atpK</name>
    <name type="ordered locus">Saci_1552</name>
</gene>
<organism>
    <name type="scientific">Sulfolobus acidocaldarius (strain ATCC 33909 / DSM 639 / JCM 8929 / NBRC 15157 / NCIMB 11770)</name>
    <dbReference type="NCBI Taxonomy" id="330779"/>
    <lineage>
        <taxon>Archaea</taxon>
        <taxon>Thermoproteota</taxon>
        <taxon>Thermoprotei</taxon>
        <taxon>Sulfolobales</taxon>
        <taxon>Sulfolobaceae</taxon>
        <taxon>Sulfolobus</taxon>
    </lineage>
</organism>
<evidence type="ECO:0000250" key="1">
    <source>
        <dbReference type="UniProtKB" id="Q57674"/>
    </source>
</evidence>
<evidence type="ECO:0000255" key="2"/>
<evidence type="ECO:0000303" key="3">
    <source>
    </source>
</evidence>
<evidence type="ECO:0000305" key="4"/>